<proteinExistence type="inferred from homology"/>
<comment type="similarity">
    <text evidence="1">Belongs to the UPF0102 family.</text>
</comment>
<gene>
    <name type="ordered locus">CPE1705</name>
</gene>
<evidence type="ECO:0000255" key="1">
    <source>
        <dbReference type="HAMAP-Rule" id="MF_00048"/>
    </source>
</evidence>
<name>Y1705_CLOPE</name>
<sequence>MKKYNKSIGFYGEDLSVSFLEKEGYSILEKNFNCSSGEIDIIAIKDEIISFIEVKSRFSNSFGNPKESVTCSKQRRIINAAKYYLHIKKLYNYYIRFDVIEINFHIDSSKYELNFLKDAFRV</sequence>
<feature type="chain" id="PRO_0000167343" description="UPF0102 protein CPE1705">
    <location>
        <begin position="1"/>
        <end position="122"/>
    </location>
</feature>
<dbReference type="EMBL" id="BA000016">
    <property type="protein sequence ID" value="BAB81411.1"/>
    <property type="molecule type" value="Genomic_DNA"/>
</dbReference>
<dbReference type="RefSeq" id="WP_011010572.1">
    <property type="nucleotide sequence ID" value="NC_003366.1"/>
</dbReference>
<dbReference type="SMR" id="Q8XJQ1"/>
<dbReference type="STRING" id="195102.gene:10490969"/>
<dbReference type="KEGG" id="cpe:CPE1705"/>
<dbReference type="HOGENOM" id="CLU_115353_2_1_9"/>
<dbReference type="Proteomes" id="UP000000818">
    <property type="component" value="Chromosome"/>
</dbReference>
<dbReference type="GO" id="GO:0003676">
    <property type="term" value="F:nucleic acid binding"/>
    <property type="evidence" value="ECO:0007669"/>
    <property type="project" value="InterPro"/>
</dbReference>
<dbReference type="CDD" id="cd20736">
    <property type="entry name" value="PoNe_Nuclease"/>
    <property type="match status" value="1"/>
</dbReference>
<dbReference type="Gene3D" id="3.40.1350.10">
    <property type="match status" value="1"/>
</dbReference>
<dbReference type="HAMAP" id="MF_00048">
    <property type="entry name" value="UPF0102"/>
    <property type="match status" value="1"/>
</dbReference>
<dbReference type="InterPro" id="IPR011335">
    <property type="entry name" value="Restrct_endonuc-II-like"/>
</dbReference>
<dbReference type="InterPro" id="IPR011856">
    <property type="entry name" value="tRNA_endonuc-like_dom_sf"/>
</dbReference>
<dbReference type="InterPro" id="IPR003509">
    <property type="entry name" value="UPF0102_YraN-like"/>
</dbReference>
<dbReference type="NCBIfam" id="NF009150">
    <property type="entry name" value="PRK12497.1-3"/>
    <property type="match status" value="1"/>
</dbReference>
<dbReference type="NCBIfam" id="TIGR00252">
    <property type="entry name" value="YraN family protein"/>
    <property type="match status" value="1"/>
</dbReference>
<dbReference type="PANTHER" id="PTHR34039">
    <property type="entry name" value="UPF0102 PROTEIN YRAN"/>
    <property type="match status" value="1"/>
</dbReference>
<dbReference type="PANTHER" id="PTHR34039:SF1">
    <property type="entry name" value="UPF0102 PROTEIN YRAN"/>
    <property type="match status" value="1"/>
</dbReference>
<dbReference type="Pfam" id="PF02021">
    <property type="entry name" value="UPF0102"/>
    <property type="match status" value="1"/>
</dbReference>
<dbReference type="SUPFAM" id="SSF52980">
    <property type="entry name" value="Restriction endonuclease-like"/>
    <property type="match status" value="1"/>
</dbReference>
<accession>Q8XJQ1</accession>
<organism>
    <name type="scientific">Clostridium perfringens (strain 13 / Type A)</name>
    <dbReference type="NCBI Taxonomy" id="195102"/>
    <lineage>
        <taxon>Bacteria</taxon>
        <taxon>Bacillati</taxon>
        <taxon>Bacillota</taxon>
        <taxon>Clostridia</taxon>
        <taxon>Eubacteriales</taxon>
        <taxon>Clostridiaceae</taxon>
        <taxon>Clostridium</taxon>
    </lineage>
</organism>
<keyword id="KW-1185">Reference proteome</keyword>
<reference key="1">
    <citation type="journal article" date="2002" name="Proc. Natl. Acad. Sci. U.S.A.">
        <title>Complete genome sequence of Clostridium perfringens, an anaerobic flesh-eater.</title>
        <authorList>
            <person name="Shimizu T."/>
            <person name="Ohtani K."/>
            <person name="Hirakawa H."/>
            <person name="Ohshima K."/>
            <person name="Yamashita A."/>
            <person name="Shiba T."/>
            <person name="Ogasawara N."/>
            <person name="Hattori M."/>
            <person name="Kuhara S."/>
            <person name="Hayashi H."/>
        </authorList>
    </citation>
    <scope>NUCLEOTIDE SEQUENCE [LARGE SCALE GENOMIC DNA]</scope>
    <source>
        <strain>13 / Type A</strain>
    </source>
</reference>
<protein>
    <recommendedName>
        <fullName evidence="1">UPF0102 protein CPE1705</fullName>
    </recommendedName>
</protein>